<comment type="similarity">
    <text evidence="1">Belongs to the bacterial ribosomal protein bS21 family.</text>
</comment>
<organism>
    <name type="scientific">Escherichia coli O127:H6 (strain E2348/69 / EPEC)</name>
    <dbReference type="NCBI Taxonomy" id="574521"/>
    <lineage>
        <taxon>Bacteria</taxon>
        <taxon>Pseudomonadati</taxon>
        <taxon>Pseudomonadota</taxon>
        <taxon>Gammaproteobacteria</taxon>
        <taxon>Enterobacterales</taxon>
        <taxon>Enterobacteriaceae</taxon>
        <taxon>Escherichia</taxon>
    </lineage>
</organism>
<sequence>MPVIKVRENEPFDVALRRFKRSCEKAGVLAEVRRREFYEKPTTERKRAKASAVKRHAKKLARENARRTRLY</sequence>
<dbReference type="EMBL" id="FM180568">
    <property type="protein sequence ID" value="CAS10906.1"/>
    <property type="molecule type" value="Genomic_DNA"/>
</dbReference>
<dbReference type="RefSeq" id="WP_001144069.1">
    <property type="nucleotide sequence ID" value="NC_011601.1"/>
</dbReference>
<dbReference type="SMR" id="B7UIX3"/>
<dbReference type="GeneID" id="98390195"/>
<dbReference type="KEGG" id="ecg:E2348C_3358"/>
<dbReference type="HOGENOM" id="CLU_159258_1_0_6"/>
<dbReference type="Proteomes" id="UP000008205">
    <property type="component" value="Chromosome"/>
</dbReference>
<dbReference type="GO" id="GO:1990904">
    <property type="term" value="C:ribonucleoprotein complex"/>
    <property type="evidence" value="ECO:0007669"/>
    <property type="project" value="UniProtKB-KW"/>
</dbReference>
<dbReference type="GO" id="GO:0005840">
    <property type="term" value="C:ribosome"/>
    <property type="evidence" value="ECO:0007669"/>
    <property type="project" value="UniProtKB-KW"/>
</dbReference>
<dbReference type="GO" id="GO:0003735">
    <property type="term" value="F:structural constituent of ribosome"/>
    <property type="evidence" value="ECO:0007669"/>
    <property type="project" value="InterPro"/>
</dbReference>
<dbReference type="GO" id="GO:0006412">
    <property type="term" value="P:translation"/>
    <property type="evidence" value="ECO:0007669"/>
    <property type="project" value="UniProtKB-UniRule"/>
</dbReference>
<dbReference type="FunFam" id="1.20.5.1150:FF:000001">
    <property type="entry name" value="30S ribosomal protein S21"/>
    <property type="match status" value="1"/>
</dbReference>
<dbReference type="Gene3D" id="1.20.5.1150">
    <property type="entry name" value="Ribosomal protein S8"/>
    <property type="match status" value="1"/>
</dbReference>
<dbReference type="HAMAP" id="MF_00358">
    <property type="entry name" value="Ribosomal_bS21"/>
    <property type="match status" value="1"/>
</dbReference>
<dbReference type="InterPro" id="IPR001911">
    <property type="entry name" value="Ribosomal_bS21"/>
</dbReference>
<dbReference type="InterPro" id="IPR018278">
    <property type="entry name" value="Ribosomal_bS21_CS"/>
</dbReference>
<dbReference type="InterPro" id="IPR038380">
    <property type="entry name" value="Ribosomal_bS21_sf"/>
</dbReference>
<dbReference type="NCBIfam" id="TIGR00030">
    <property type="entry name" value="S21p"/>
    <property type="match status" value="1"/>
</dbReference>
<dbReference type="PANTHER" id="PTHR21109">
    <property type="entry name" value="MITOCHONDRIAL 28S RIBOSOMAL PROTEIN S21"/>
    <property type="match status" value="1"/>
</dbReference>
<dbReference type="PANTHER" id="PTHR21109:SF22">
    <property type="entry name" value="SMALL RIBOSOMAL SUBUNIT PROTEIN BS21"/>
    <property type="match status" value="1"/>
</dbReference>
<dbReference type="Pfam" id="PF01165">
    <property type="entry name" value="Ribosomal_S21"/>
    <property type="match status" value="1"/>
</dbReference>
<dbReference type="PRINTS" id="PR00976">
    <property type="entry name" value="RIBOSOMALS21"/>
</dbReference>
<dbReference type="PROSITE" id="PS01181">
    <property type="entry name" value="RIBOSOMAL_S21"/>
    <property type="match status" value="1"/>
</dbReference>
<name>RS21_ECO27</name>
<gene>
    <name evidence="1" type="primary">rpsU</name>
    <name type="ordered locus">E2348C_3358</name>
</gene>
<feature type="chain" id="PRO_1000194292" description="Small ribosomal subunit protein bS21">
    <location>
        <begin position="1"/>
        <end position="71"/>
    </location>
</feature>
<feature type="region of interest" description="Disordered" evidence="2">
    <location>
        <begin position="43"/>
        <end position="71"/>
    </location>
</feature>
<feature type="compositionally biased region" description="Basic residues" evidence="2">
    <location>
        <begin position="46"/>
        <end position="59"/>
    </location>
</feature>
<feature type="compositionally biased region" description="Basic and acidic residues" evidence="2">
    <location>
        <begin position="60"/>
        <end position="71"/>
    </location>
</feature>
<reference key="1">
    <citation type="journal article" date="2009" name="J. Bacteriol.">
        <title>Complete genome sequence and comparative genome analysis of enteropathogenic Escherichia coli O127:H6 strain E2348/69.</title>
        <authorList>
            <person name="Iguchi A."/>
            <person name="Thomson N.R."/>
            <person name="Ogura Y."/>
            <person name="Saunders D."/>
            <person name="Ooka T."/>
            <person name="Henderson I.R."/>
            <person name="Harris D."/>
            <person name="Asadulghani M."/>
            <person name="Kurokawa K."/>
            <person name="Dean P."/>
            <person name="Kenny B."/>
            <person name="Quail M.A."/>
            <person name="Thurston S."/>
            <person name="Dougan G."/>
            <person name="Hayashi T."/>
            <person name="Parkhill J."/>
            <person name="Frankel G."/>
        </authorList>
    </citation>
    <scope>NUCLEOTIDE SEQUENCE [LARGE SCALE GENOMIC DNA]</scope>
    <source>
        <strain>E2348/69 / EPEC</strain>
    </source>
</reference>
<evidence type="ECO:0000255" key="1">
    <source>
        <dbReference type="HAMAP-Rule" id="MF_00358"/>
    </source>
</evidence>
<evidence type="ECO:0000256" key="2">
    <source>
        <dbReference type="SAM" id="MobiDB-lite"/>
    </source>
</evidence>
<evidence type="ECO:0000305" key="3"/>
<accession>B7UIX3</accession>
<keyword id="KW-1185">Reference proteome</keyword>
<keyword id="KW-0687">Ribonucleoprotein</keyword>
<keyword id="KW-0689">Ribosomal protein</keyword>
<protein>
    <recommendedName>
        <fullName evidence="1">Small ribosomal subunit protein bS21</fullName>
    </recommendedName>
    <alternativeName>
        <fullName evidence="3">30S ribosomal protein S21</fullName>
    </alternativeName>
</protein>
<proteinExistence type="inferred from homology"/>